<protein>
    <recommendedName>
        <fullName>NADH-cytochrome b5 reductase 1</fullName>
        <ecNumber evidence="2">1.6.2.2</ecNumber>
    </recommendedName>
    <alternativeName>
        <fullName>Microsomal cytochrome b reductase</fullName>
    </alternativeName>
</protein>
<comment type="function">
    <text evidence="2">NADH-dependent reductase for dph3 and cytochrome b5. Required for the first step of diphthamide biosynthesis, a post-translational modification of histidine which occurs in elongation factor 2. Dph1 and dph2 transfer a 3-amino-3-carboxypropyl (ACP) group from S-adenosyl-L-methionine (SAM) to a histidine residue, the reaction is assisted by a reduction system comprising dph3 and a NADH-dependent reductase, predominantly cbr1. By reducing dph3, also involved in the formation of the tRNA wobble base modification mcm5s 2U (5-methoxycarbonylmethyl-2-thiouridine), mediated by the elongator complex. The cytochrome b5/NADH cytochrome b5 reductase electron transfer system supports the catalytic activity of several sterol biosynthetic enzymes.</text>
</comment>
<comment type="catalytic activity">
    <reaction evidence="2">
        <text>2 Fe(III)-[cytochrome b5] + NADH = 2 Fe(II)-[cytochrome b5] + NAD(+) + H(+)</text>
        <dbReference type="Rhea" id="RHEA:46680"/>
        <dbReference type="Rhea" id="RHEA-COMP:10438"/>
        <dbReference type="Rhea" id="RHEA-COMP:10439"/>
        <dbReference type="ChEBI" id="CHEBI:15378"/>
        <dbReference type="ChEBI" id="CHEBI:29033"/>
        <dbReference type="ChEBI" id="CHEBI:29034"/>
        <dbReference type="ChEBI" id="CHEBI:57540"/>
        <dbReference type="ChEBI" id="CHEBI:57945"/>
        <dbReference type="EC" id="1.6.2.2"/>
    </reaction>
</comment>
<comment type="catalytic activity">
    <reaction evidence="2">
        <text>2 Fe(3+)-[Dph3] + NADH = 2 Fe(2+)-[Dph3] + NAD(+) + H(+)</text>
        <dbReference type="Rhea" id="RHEA:71231"/>
        <dbReference type="Rhea" id="RHEA-COMP:18002"/>
        <dbReference type="Rhea" id="RHEA-COMP:18003"/>
        <dbReference type="ChEBI" id="CHEBI:15378"/>
        <dbReference type="ChEBI" id="CHEBI:29033"/>
        <dbReference type="ChEBI" id="CHEBI:29034"/>
        <dbReference type="ChEBI" id="CHEBI:57540"/>
        <dbReference type="ChEBI" id="CHEBI:57945"/>
        <dbReference type="ChEBI" id="CHEBI:83228"/>
    </reaction>
    <physiologicalReaction direction="left-to-right" evidence="2">
        <dbReference type="Rhea" id="RHEA:71232"/>
    </physiologicalReaction>
</comment>
<comment type="cofactor">
    <cofactor evidence="3">
        <name>FAD</name>
        <dbReference type="ChEBI" id="CHEBI:57692"/>
    </cofactor>
</comment>
<comment type="pathway">
    <text evidence="2">Protein modification; peptidyl-diphthamide biosynthesis.</text>
</comment>
<comment type="subunit">
    <text evidence="2">Monomer. Component of the 2-(3-amino-3-carboxypropyl)histidine synthase complex composed of dph1, dph2, dph3 and a NADH-dependent reductase, predominantly cbr1.</text>
</comment>
<comment type="subcellular location">
    <subcellularLocation>
        <location evidence="2">Mitochondrion outer membrane</location>
        <topology evidence="3">Single-pass membrane protein</topology>
    </subcellularLocation>
</comment>
<comment type="similarity">
    <text evidence="5">Belongs to the flavoprotein pyridine nucleotide cytochrome reductase family.</text>
</comment>
<comment type="sequence caution" evidence="5">
    <conflict type="erroneous gene model prediction">
        <sequence resource="EMBL-CDS" id="EAA58750"/>
    </conflict>
</comment>
<feature type="chain" id="PRO_0000330153" description="NADH-cytochrome b5 reductase 1">
    <location>
        <begin position="1"/>
        <end position="310"/>
    </location>
</feature>
<feature type="transmembrane region" description="Helical" evidence="3">
    <location>
        <begin position="30"/>
        <end position="50"/>
    </location>
</feature>
<feature type="domain" description="FAD-binding FR-type" evidence="4">
    <location>
        <begin position="61"/>
        <end position="166"/>
    </location>
</feature>
<feature type="binding site" evidence="1">
    <location>
        <begin position="146"/>
        <end position="160"/>
    </location>
    <ligand>
        <name>FAD</name>
        <dbReference type="ChEBI" id="CHEBI:57692"/>
    </ligand>
</feature>
<feature type="binding site" evidence="1">
    <location>
        <begin position="172"/>
        <end position="209"/>
    </location>
    <ligand>
        <name>FAD</name>
        <dbReference type="ChEBI" id="CHEBI:57692"/>
    </ligand>
</feature>
<evidence type="ECO:0000250" key="1"/>
<evidence type="ECO:0000250" key="2">
    <source>
        <dbReference type="UniProtKB" id="P38626"/>
    </source>
</evidence>
<evidence type="ECO:0000255" key="3"/>
<evidence type="ECO:0000255" key="4">
    <source>
        <dbReference type="PROSITE-ProRule" id="PRU00716"/>
    </source>
</evidence>
<evidence type="ECO:0000305" key="5"/>
<dbReference type="EC" id="1.6.2.2" evidence="2"/>
<dbReference type="EMBL" id="AACD01000107">
    <property type="protein sequence ID" value="EAA58750.1"/>
    <property type="status" value="ALT_SEQ"/>
    <property type="molecule type" value="Genomic_DNA"/>
</dbReference>
<dbReference type="EMBL" id="BN001301">
    <property type="protein sequence ID" value="CBF69615.1"/>
    <property type="molecule type" value="Genomic_DNA"/>
</dbReference>
<dbReference type="RefSeq" id="XP_663970.1">
    <property type="nucleotide sequence ID" value="XM_658878.1"/>
</dbReference>
<dbReference type="SMR" id="Q5AZB4"/>
<dbReference type="FunCoup" id="Q5AZB4">
    <property type="interactions" value="252"/>
</dbReference>
<dbReference type="STRING" id="227321.Q5AZB4"/>
<dbReference type="EnsemblFungi" id="CBF69615">
    <property type="protein sequence ID" value="CBF69615"/>
    <property type="gene ID" value="ANIA_06366"/>
</dbReference>
<dbReference type="KEGG" id="ani:ANIA_06366"/>
<dbReference type="VEuPathDB" id="FungiDB:AN6366"/>
<dbReference type="eggNOG" id="KOG0534">
    <property type="taxonomic scope" value="Eukaryota"/>
</dbReference>
<dbReference type="HOGENOM" id="CLU_003827_9_0_1"/>
<dbReference type="InParanoid" id="Q5AZB4"/>
<dbReference type="OMA" id="VQIFMCG"/>
<dbReference type="OrthoDB" id="432685at2759"/>
<dbReference type="UniPathway" id="UPA00559"/>
<dbReference type="Proteomes" id="UP000000560">
    <property type="component" value="Chromosome I"/>
</dbReference>
<dbReference type="GO" id="GO:0005741">
    <property type="term" value="C:mitochondrial outer membrane"/>
    <property type="evidence" value="ECO:0007669"/>
    <property type="project" value="UniProtKB-SubCell"/>
</dbReference>
<dbReference type="GO" id="GO:0004128">
    <property type="term" value="F:cytochrome-b5 reductase activity, acting on NAD(P)H"/>
    <property type="evidence" value="ECO:0000250"/>
    <property type="project" value="UniProtKB"/>
</dbReference>
<dbReference type="GO" id="GO:0003954">
    <property type="term" value="F:NADH dehydrogenase activity"/>
    <property type="evidence" value="ECO:0000250"/>
    <property type="project" value="UniProtKB"/>
</dbReference>
<dbReference type="GO" id="GO:0016740">
    <property type="term" value="F:transferase activity"/>
    <property type="evidence" value="ECO:0007669"/>
    <property type="project" value="UniProtKB-KW"/>
</dbReference>
<dbReference type="GO" id="GO:0017183">
    <property type="term" value="P:protein histidyl modification to diphthamide"/>
    <property type="evidence" value="ECO:0000250"/>
    <property type="project" value="UniProtKB"/>
</dbReference>
<dbReference type="GO" id="GO:0002926">
    <property type="term" value="P:tRNA wobble base 5-methoxycarbonylmethyl-2-thiouridinylation"/>
    <property type="evidence" value="ECO:0000250"/>
    <property type="project" value="UniProtKB"/>
</dbReference>
<dbReference type="CDD" id="cd06183">
    <property type="entry name" value="cyt_b5_reduct_like"/>
    <property type="match status" value="1"/>
</dbReference>
<dbReference type="FunFam" id="2.40.30.10:FF:000032">
    <property type="entry name" value="NADH-cytochrome b5 reductase"/>
    <property type="match status" value="1"/>
</dbReference>
<dbReference type="FunFam" id="3.40.50.80:FF:000019">
    <property type="entry name" value="NADH-cytochrome b5 reductase"/>
    <property type="match status" value="1"/>
</dbReference>
<dbReference type="Gene3D" id="3.40.50.80">
    <property type="entry name" value="Nucleotide-binding domain of ferredoxin-NADP reductase (FNR) module"/>
    <property type="match status" value="1"/>
</dbReference>
<dbReference type="Gene3D" id="2.40.30.10">
    <property type="entry name" value="Translation factors"/>
    <property type="match status" value="1"/>
</dbReference>
<dbReference type="InterPro" id="IPR001834">
    <property type="entry name" value="CBR-like"/>
</dbReference>
<dbReference type="InterPro" id="IPR008333">
    <property type="entry name" value="Cbr1-like_FAD-bd_dom"/>
</dbReference>
<dbReference type="InterPro" id="IPR017927">
    <property type="entry name" value="FAD-bd_FR_type"/>
</dbReference>
<dbReference type="InterPro" id="IPR001709">
    <property type="entry name" value="Flavoprot_Pyr_Nucl_cyt_Rdtase"/>
</dbReference>
<dbReference type="InterPro" id="IPR039261">
    <property type="entry name" value="FNR_nucleotide-bd"/>
</dbReference>
<dbReference type="InterPro" id="IPR001433">
    <property type="entry name" value="OxRdtase_FAD/NAD-bd"/>
</dbReference>
<dbReference type="InterPro" id="IPR017938">
    <property type="entry name" value="Riboflavin_synthase-like_b-brl"/>
</dbReference>
<dbReference type="PANTHER" id="PTHR19370">
    <property type="entry name" value="NADH-CYTOCHROME B5 REDUCTASE"/>
    <property type="match status" value="1"/>
</dbReference>
<dbReference type="PANTHER" id="PTHR19370:SF184">
    <property type="entry name" value="NADH-CYTOCHROME B5 REDUCTASE-LIKE"/>
    <property type="match status" value="1"/>
</dbReference>
<dbReference type="Pfam" id="PF00970">
    <property type="entry name" value="FAD_binding_6"/>
    <property type="match status" value="1"/>
</dbReference>
<dbReference type="Pfam" id="PF00175">
    <property type="entry name" value="NAD_binding_1"/>
    <property type="match status" value="1"/>
</dbReference>
<dbReference type="PRINTS" id="PR00406">
    <property type="entry name" value="CYTB5RDTASE"/>
</dbReference>
<dbReference type="PRINTS" id="PR00371">
    <property type="entry name" value="FPNCR"/>
</dbReference>
<dbReference type="SUPFAM" id="SSF52343">
    <property type="entry name" value="Ferredoxin reductase-like, C-terminal NADP-linked domain"/>
    <property type="match status" value="1"/>
</dbReference>
<dbReference type="SUPFAM" id="SSF63380">
    <property type="entry name" value="Riboflavin synthase domain-like"/>
    <property type="match status" value="1"/>
</dbReference>
<dbReference type="PROSITE" id="PS51384">
    <property type="entry name" value="FAD_FR"/>
    <property type="match status" value="1"/>
</dbReference>
<name>NCB5R_EMENI</name>
<gene>
    <name type="primary">cbr1</name>
    <name type="ORF">AN6366</name>
</gene>
<proteinExistence type="inferred from homology"/>
<accession>Q5AZB4</accession>
<accession>C8V0X3</accession>
<keyword id="KW-0274">FAD</keyword>
<keyword id="KW-0285">Flavoprotein</keyword>
<keyword id="KW-0472">Membrane</keyword>
<keyword id="KW-0496">Mitochondrion</keyword>
<keyword id="KW-1000">Mitochondrion outer membrane</keyword>
<keyword id="KW-0520">NAD</keyword>
<keyword id="KW-0560">Oxidoreductase</keyword>
<keyword id="KW-1185">Reference proteome</keyword>
<keyword id="KW-0808">Transferase</keyword>
<keyword id="KW-0812">Transmembrane</keyword>
<keyword id="KW-1133">Transmembrane helix</keyword>
<sequence length="310" mass="33823">MSALSLENITGVYAPSALLVVGTFILKKEWVPFAVALAAGFVAWKLSVGGSSKPRKVLNPNEFQNFVLKEKNDISHNVTIYRFALPRPTDILGLPIGQHISLAATIEGQPKEVVRSYTPISSDNEAGYFDLLVKAYPQGNISKYLTTLKVGDTMKVRGPKGAMVYTPNMCRHIGMIAGGTGITPMLQIIKAIIRNRPRNGGNDTTQVDLIFANVNPDDILLKDELEKLAAEDDGFRIYYVLNNPPEGWTGGVGFVTPDMIKERLPAPASDIKILLCGPPPMVSAMKKATESLGYTKARPVSKLEDQVFCF</sequence>
<organism>
    <name type="scientific">Emericella nidulans (strain FGSC A4 / ATCC 38163 / CBS 112.46 / NRRL 194 / M139)</name>
    <name type="common">Aspergillus nidulans</name>
    <dbReference type="NCBI Taxonomy" id="227321"/>
    <lineage>
        <taxon>Eukaryota</taxon>
        <taxon>Fungi</taxon>
        <taxon>Dikarya</taxon>
        <taxon>Ascomycota</taxon>
        <taxon>Pezizomycotina</taxon>
        <taxon>Eurotiomycetes</taxon>
        <taxon>Eurotiomycetidae</taxon>
        <taxon>Eurotiales</taxon>
        <taxon>Aspergillaceae</taxon>
        <taxon>Aspergillus</taxon>
        <taxon>Aspergillus subgen. Nidulantes</taxon>
    </lineage>
</organism>
<reference key="1">
    <citation type="journal article" date="2005" name="Nature">
        <title>Sequencing of Aspergillus nidulans and comparative analysis with A. fumigatus and A. oryzae.</title>
        <authorList>
            <person name="Galagan J.E."/>
            <person name="Calvo S.E."/>
            <person name="Cuomo C."/>
            <person name="Ma L.-J."/>
            <person name="Wortman J.R."/>
            <person name="Batzoglou S."/>
            <person name="Lee S.-I."/>
            <person name="Bastuerkmen M."/>
            <person name="Spevak C.C."/>
            <person name="Clutterbuck J."/>
            <person name="Kapitonov V."/>
            <person name="Jurka J."/>
            <person name="Scazzocchio C."/>
            <person name="Farman M.L."/>
            <person name="Butler J."/>
            <person name="Purcell S."/>
            <person name="Harris S."/>
            <person name="Braus G.H."/>
            <person name="Draht O."/>
            <person name="Busch S."/>
            <person name="D'Enfert C."/>
            <person name="Bouchier C."/>
            <person name="Goldman G.H."/>
            <person name="Bell-Pedersen D."/>
            <person name="Griffiths-Jones S."/>
            <person name="Doonan J.H."/>
            <person name="Yu J."/>
            <person name="Vienken K."/>
            <person name="Pain A."/>
            <person name="Freitag M."/>
            <person name="Selker E.U."/>
            <person name="Archer D.B."/>
            <person name="Penalva M.A."/>
            <person name="Oakley B.R."/>
            <person name="Momany M."/>
            <person name="Tanaka T."/>
            <person name="Kumagai T."/>
            <person name="Asai K."/>
            <person name="Machida M."/>
            <person name="Nierman W.C."/>
            <person name="Denning D.W."/>
            <person name="Caddick M.X."/>
            <person name="Hynes M."/>
            <person name="Paoletti M."/>
            <person name="Fischer R."/>
            <person name="Miller B.L."/>
            <person name="Dyer P.S."/>
            <person name="Sachs M.S."/>
            <person name="Osmani S.A."/>
            <person name="Birren B.W."/>
        </authorList>
    </citation>
    <scope>NUCLEOTIDE SEQUENCE [LARGE SCALE GENOMIC DNA]</scope>
    <source>
        <strain>FGSC A4 / ATCC 38163 / CBS 112.46 / NRRL 194 / M139</strain>
    </source>
</reference>
<reference key="2">
    <citation type="journal article" date="2009" name="Fungal Genet. Biol.">
        <title>The 2008 update of the Aspergillus nidulans genome annotation: a community effort.</title>
        <authorList>
            <person name="Wortman J.R."/>
            <person name="Gilsenan J.M."/>
            <person name="Joardar V."/>
            <person name="Deegan J."/>
            <person name="Clutterbuck J."/>
            <person name="Andersen M.R."/>
            <person name="Archer D."/>
            <person name="Bencina M."/>
            <person name="Braus G."/>
            <person name="Coutinho P."/>
            <person name="von Dohren H."/>
            <person name="Doonan J."/>
            <person name="Driessen A.J."/>
            <person name="Durek P."/>
            <person name="Espeso E."/>
            <person name="Fekete E."/>
            <person name="Flipphi M."/>
            <person name="Estrada C.G."/>
            <person name="Geysens S."/>
            <person name="Goldman G."/>
            <person name="de Groot P.W."/>
            <person name="Hansen K."/>
            <person name="Harris S.D."/>
            <person name="Heinekamp T."/>
            <person name="Helmstaedt K."/>
            <person name="Henrissat B."/>
            <person name="Hofmann G."/>
            <person name="Homan T."/>
            <person name="Horio T."/>
            <person name="Horiuchi H."/>
            <person name="James S."/>
            <person name="Jones M."/>
            <person name="Karaffa L."/>
            <person name="Karanyi Z."/>
            <person name="Kato M."/>
            <person name="Keller N."/>
            <person name="Kelly D.E."/>
            <person name="Kiel J.A."/>
            <person name="Kim J.M."/>
            <person name="van der Klei I.J."/>
            <person name="Klis F.M."/>
            <person name="Kovalchuk A."/>
            <person name="Krasevec N."/>
            <person name="Kubicek C.P."/>
            <person name="Liu B."/>
            <person name="Maccabe A."/>
            <person name="Meyer V."/>
            <person name="Mirabito P."/>
            <person name="Miskei M."/>
            <person name="Mos M."/>
            <person name="Mullins J."/>
            <person name="Nelson D.R."/>
            <person name="Nielsen J."/>
            <person name="Oakley B.R."/>
            <person name="Osmani S.A."/>
            <person name="Pakula T."/>
            <person name="Paszewski A."/>
            <person name="Paulsen I."/>
            <person name="Pilsyk S."/>
            <person name="Pocsi I."/>
            <person name="Punt P.J."/>
            <person name="Ram A.F."/>
            <person name="Ren Q."/>
            <person name="Robellet X."/>
            <person name="Robson G."/>
            <person name="Seiboth B."/>
            <person name="van Solingen P."/>
            <person name="Specht T."/>
            <person name="Sun J."/>
            <person name="Taheri-Talesh N."/>
            <person name="Takeshita N."/>
            <person name="Ussery D."/>
            <person name="vanKuyk P.A."/>
            <person name="Visser H."/>
            <person name="van de Vondervoort P.J."/>
            <person name="de Vries R.P."/>
            <person name="Walton J."/>
            <person name="Xiang X."/>
            <person name="Xiong Y."/>
            <person name="Zeng A.P."/>
            <person name="Brandt B.W."/>
            <person name="Cornell M.J."/>
            <person name="van den Hondel C.A."/>
            <person name="Visser J."/>
            <person name="Oliver S.G."/>
            <person name="Turner G."/>
        </authorList>
    </citation>
    <scope>GENOME REANNOTATION</scope>
    <source>
        <strain>FGSC A4 / ATCC 38163 / CBS 112.46 / NRRL 194 / M139</strain>
    </source>
</reference>